<organism>
    <name type="scientific">Metamycoplasma arthritidis (strain 158L3-1)</name>
    <name type="common">Mycoplasma arthritidis</name>
    <dbReference type="NCBI Taxonomy" id="243272"/>
    <lineage>
        <taxon>Bacteria</taxon>
        <taxon>Bacillati</taxon>
        <taxon>Mycoplasmatota</taxon>
        <taxon>Mycoplasmoidales</taxon>
        <taxon>Metamycoplasmataceae</taxon>
        <taxon>Metamycoplasma</taxon>
    </lineage>
</organism>
<accession>B3PN46</accession>
<gene>
    <name evidence="1" type="primary">rpsD</name>
    <name type="ordered locus">MARTH_orf682</name>
</gene>
<feature type="chain" id="PRO_1000140761" description="Small ribosomal subunit protein uS4">
    <location>
        <begin position="1"/>
        <end position="200"/>
    </location>
</feature>
<feature type="domain" description="S4 RNA-binding" evidence="1">
    <location>
        <begin position="94"/>
        <end position="157"/>
    </location>
</feature>
<evidence type="ECO:0000255" key="1">
    <source>
        <dbReference type="HAMAP-Rule" id="MF_01306"/>
    </source>
</evidence>
<evidence type="ECO:0000305" key="2"/>
<comment type="function">
    <text evidence="1">One of the primary rRNA binding proteins, it binds directly to 16S rRNA where it nucleates assembly of the body of the 30S subunit.</text>
</comment>
<comment type="function">
    <text evidence="1">With S5 and S12 plays an important role in translational accuracy.</text>
</comment>
<comment type="subunit">
    <text evidence="1">Part of the 30S ribosomal subunit. Contacts protein S5. The interaction surface between S4 and S5 is involved in control of translational fidelity.</text>
</comment>
<comment type="similarity">
    <text evidence="1">Belongs to the universal ribosomal protein uS4 family.</text>
</comment>
<keyword id="KW-1185">Reference proteome</keyword>
<keyword id="KW-0687">Ribonucleoprotein</keyword>
<keyword id="KW-0689">Ribosomal protein</keyword>
<keyword id="KW-0694">RNA-binding</keyword>
<keyword id="KW-0699">rRNA-binding</keyword>
<name>RS4_META1</name>
<protein>
    <recommendedName>
        <fullName evidence="1">Small ribosomal subunit protein uS4</fullName>
    </recommendedName>
    <alternativeName>
        <fullName evidence="2">30S ribosomal protein S4</fullName>
    </alternativeName>
</protein>
<reference key="1">
    <citation type="journal article" date="2008" name="Infect. Immun.">
        <title>Genome of Mycoplasma arthritidis.</title>
        <authorList>
            <person name="Dybvig K."/>
            <person name="Zuhua C."/>
            <person name="Lao P."/>
            <person name="Jordan D.S."/>
            <person name="French C.T."/>
            <person name="Tu A.H."/>
            <person name="Loraine A.E."/>
        </authorList>
    </citation>
    <scope>NUCLEOTIDE SEQUENCE [LARGE SCALE GENOMIC DNA]</scope>
    <source>
        <strain>158L3-1</strain>
    </source>
</reference>
<dbReference type="EMBL" id="CP001047">
    <property type="protein sequence ID" value="ACF07448.1"/>
    <property type="molecule type" value="Genomic_DNA"/>
</dbReference>
<dbReference type="RefSeq" id="WP_012498405.1">
    <property type="nucleotide sequence ID" value="NC_011025.1"/>
</dbReference>
<dbReference type="SMR" id="B3PN46"/>
<dbReference type="STRING" id="243272.MARTH_orf682"/>
<dbReference type="KEGG" id="mat:MARTH_orf682"/>
<dbReference type="eggNOG" id="COG0522">
    <property type="taxonomic scope" value="Bacteria"/>
</dbReference>
<dbReference type="HOGENOM" id="CLU_092403_0_1_14"/>
<dbReference type="Proteomes" id="UP000008812">
    <property type="component" value="Chromosome"/>
</dbReference>
<dbReference type="GO" id="GO:0015935">
    <property type="term" value="C:small ribosomal subunit"/>
    <property type="evidence" value="ECO:0007669"/>
    <property type="project" value="InterPro"/>
</dbReference>
<dbReference type="GO" id="GO:0019843">
    <property type="term" value="F:rRNA binding"/>
    <property type="evidence" value="ECO:0007669"/>
    <property type="project" value="UniProtKB-UniRule"/>
</dbReference>
<dbReference type="GO" id="GO:0003735">
    <property type="term" value="F:structural constituent of ribosome"/>
    <property type="evidence" value="ECO:0007669"/>
    <property type="project" value="InterPro"/>
</dbReference>
<dbReference type="GO" id="GO:0042274">
    <property type="term" value="P:ribosomal small subunit biogenesis"/>
    <property type="evidence" value="ECO:0007669"/>
    <property type="project" value="TreeGrafter"/>
</dbReference>
<dbReference type="GO" id="GO:0006412">
    <property type="term" value="P:translation"/>
    <property type="evidence" value="ECO:0007669"/>
    <property type="project" value="UniProtKB-UniRule"/>
</dbReference>
<dbReference type="CDD" id="cd00165">
    <property type="entry name" value="S4"/>
    <property type="match status" value="1"/>
</dbReference>
<dbReference type="FunFam" id="3.10.290.10:FF:000001">
    <property type="entry name" value="30S ribosomal protein S4"/>
    <property type="match status" value="1"/>
</dbReference>
<dbReference type="Gene3D" id="1.10.1050.10">
    <property type="entry name" value="Ribosomal Protein S4 Delta 41, Chain A, domain 1"/>
    <property type="match status" value="1"/>
</dbReference>
<dbReference type="Gene3D" id="3.10.290.10">
    <property type="entry name" value="RNA-binding S4 domain"/>
    <property type="match status" value="1"/>
</dbReference>
<dbReference type="HAMAP" id="MF_01306_B">
    <property type="entry name" value="Ribosomal_uS4_B"/>
    <property type="match status" value="1"/>
</dbReference>
<dbReference type="InterPro" id="IPR022801">
    <property type="entry name" value="Ribosomal_uS4"/>
</dbReference>
<dbReference type="InterPro" id="IPR005709">
    <property type="entry name" value="Ribosomal_uS4_bac-type"/>
</dbReference>
<dbReference type="InterPro" id="IPR018079">
    <property type="entry name" value="Ribosomal_uS4_CS"/>
</dbReference>
<dbReference type="InterPro" id="IPR001912">
    <property type="entry name" value="Ribosomal_uS4_N"/>
</dbReference>
<dbReference type="InterPro" id="IPR002942">
    <property type="entry name" value="S4_RNA-bd"/>
</dbReference>
<dbReference type="InterPro" id="IPR036986">
    <property type="entry name" value="S4_RNA-bd_sf"/>
</dbReference>
<dbReference type="NCBIfam" id="NF003717">
    <property type="entry name" value="PRK05327.1"/>
    <property type="match status" value="1"/>
</dbReference>
<dbReference type="NCBIfam" id="TIGR01017">
    <property type="entry name" value="rpsD_bact"/>
    <property type="match status" value="1"/>
</dbReference>
<dbReference type="PANTHER" id="PTHR11831">
    <property type="entry name" value="30S 40S RIBOSOMAL PROTEIN"/>
    <property type="match status" value="1"/>
</dbReference>
<dbReference type="PANTHER" id="PTHR11831:SF4">
    <property type="entry name" value="SMALL RIBOSOMAL SUBUNIT PROTEIN US4M"/>
    <property type="match status" value="1"/>
</dbReference>
<dbReference type="Pfam" id="PF00163">
    <property type="entry name" value="Ribosomal_S4"/>
    <property type="match status" value="1"/>
</dbReference>
<dbReference type="Pfam" id="PF01479">
    <property type="entry name" value="S4"/>
    <property type="match status" value="1"/>
</dbReference>
<dbReference type="SMART" id="SM01390">
    <property type="entry name" value="Ribosomal_S4"/>
    <property type="match status" value="1"/>
</dbReference>
<dbReference type="SMART" id="SM00363">
    <property type="entry name" value="S4"/>
    <property type="match status" value="1"/>
</dbReference>
<dbReference type="SUPFAM" id="SSF55174">
    <property type="entry name" value="Alpha-L RNA-binding motif"/>
    <property type="match status" value="1"/>
</dbReference>
<dbReference type="PROSITE" id="PS00632">
    <property type="entry name" value="RIBOSOMAL_S4"/>
    <property type="match status" value="1"/>
</dbReference>
<dbReference type="PROSITE" id="PS50889">
    <property type="entry name" value="S4"/>
    <property type="match status" value="1"/>
</dbReference>
<sequence>MSRFLGSIFKKSRRYGISLLENNKEFTKGKKRTTAPGQHGARRVKPSDYQLHLYEKQKVRYMYGLNERQFKHLYSIASKKQGVTGVILLQMIESRLDNLVFRAGFARTRAQARQFVNHGHFTVDGHKANIPSMVIKVGSVIEMKPSLQTSPQVKDAVEAMTVSPWLTKTDFKVTFNRLPERKEFAKDINEALIVEYYNRR</sequence>
<proteinExistence type="inferred from homology"/>